<proteinExistence type="evidence at protein level"/>
<evidence type="ECO:0000250" key="1">
    <source>
        <dbReference type="UniProtKB" id="P37802"/>
    </source>
</evidence>
<evidence type="ECO:0000255" key="2">
    <source>
        <dbReference type="PROSITE-ProRule" id="PRU00044"/>
    </source>
</evidence>
<evidence type="ECO:0000305" key="3"/>
<evidence type="ECO:0007744" key="4">
    <source>
    </source>
</evidence>
<gene>
    <name type="primary">Tagln2</name>
</gene>
<comment type="similarity">
    <text evidence="3">Belongs to the calponin family.</text>
</comment>
<organism>
    <name type="scientific">Rattus norvegicus</name>
    <name type="common">Rat</name>
    <dbReference type="NCBI Taxonomy" id="10116"/>
    <lineage>
        <taxon>Eukaryota</taxon>
        <taxon>Metazoa</taxon>
        <taxon>Chordata</taxon>
        <taxon>Craniata</taxon>
        <taxon>Vertebrata</taxon>
        <taxon>Euteleostomi</taxon>
        <taxon>Mammalia</taxon>
        <taxon>Eutheria</taxon>
        <taxon>Euarchontoglires</taxon>
        <taxon>Glires</taxon>
        <taxon>Rodentia</taxon>
        <taxon>Myomorpha</taxon>
        <taxon>Muroidea</taxon>
        <taxon>Muridae</taxon>
        <taxon>Murinae</taxon>
        <taxon>Rattus</taxon>
    </lineage>
</organism>
<feature type="initiator methionine" description="Removed" evidence="1">
    <location>
        <position position="1"/>
    </location>
</feature>
<feature type="chain" id="PRO_0000355991" description="Transgelin-2">
    <location>
        <begin position="2"/>
        <end position="199"/>
    </location>
</feature>
<feature type="domain" description="Calponin-homology (CH)" evidence="2">
    <location>
        <begin position="24"/>
        <end position="136"/>
    </location>
</feature>
<feature type="repeat" description="Calponin-like">
    <location>
        <begin position="174"/>
        <end position="199"/>
    </location>
</feature>
<feature type="modified residue" description="N-acetylalanine" evidence="1">
    <location>
        <position position="2"/>
    </location>
</feature>
<feature type="modified residue" description="Phosphoserine" evidence="1">
    <location>
        <position position="11"/>
    </location>
</feature>
<feature type="modified residue" description="N6-acetyllysine" evidence="1">
    <location>
        <position position="17"/>
    </location>
</feature>
<feature type="modified residue" description="N6-acetyllysine" evidence="1">
    <location>
        <position position="20"/>
    </location>
</feature>
<feature type="modified residue" description="Phosphoserine" evidence="4">
    <location>
        <position position="163"/>
    </location>
</feature>
<feature type="modified residue" description="Phosphothreonine" evidence="1">
    <location>
        <position position="180"/>
    </location>
</feature>
<feature type="modified residue" description="Omega-N-methylarginine" evidence="1">
    <location>
        <position position="182"/>
    </location>
</feature>
<feature type="modified residue" description="Omega-N-methylarginine" evidence="1">
    <location>
        <position position="196"/>
    </location>
</feature>
<feature type="cross-link" description="Glycyl lysine isopeptide (Lys-Gly) (interchain with G-Cter in SUMO2)" evidence="1">
    <location>
        <position position="171"/>
    </location>
</feature>
<dbReference type="EMBL" id="BC084703">
    <property type="protein sequence ID" value="AAH84703.1"/>
    <property type="molecule type" value="mRNA"/>
</dbReference>
<dbReference type="RefSeq" id="NP_001013145.1">
    <property type="nucleotide sequence ID" value="NM_001013127.1"/>
</dbReference>
<dbReference type="RefSeq" id="XP_006250357.1">
    <property type="nucleotide sequence ID" value="XM_006250295.4"/>
</dbReference>
<dbReference type="RefSeq" id="XP_038946729.1">
    <property type="nucleotide sequence ID" value="XM_039090801.2"/>
</dbReference>
<dbReference type="RefSeq" id="XP_063128445.1">
    <property type="nucleotide sequence ID" value="XM_063272375.1"/>
</dbReference>
<dbReference type="SMR" id="Q5XFX0"/>
<dbReference type="FunCoup" id="Q5XFX0">
    <property type="interactions" value="1081"/>
</dbReference>
<dbReference type="IntAct" id="Q5XFX0">
    <property type="interactions" value="3"/>
</dbReference>
<dbReference type="MINT" id="Q5XFX0"/>
<dbReference type="STRING" id="10116.ENSRNOP00000011208"/>
<dbReference type="iPTMnet" id="Q5XFX0"/>
<dbReference type="PhosphoSitePlus" id="Q5XFX0"/>
<dbReference type="SwissPalm" id="Q5XFX0"/>
<dbReference type="jPOST" id="Q5XFX0"/>
<dbReference type="PaxDb" id="10116-ENSRNOP00000011208"/>
<dbReference type="Ensembl" id="ENSRNOT00000011208.8">
    <property type="protein sequence ID" value="ENSRNOP00000011208.4"/>
    <property type="gene ID" value="ENSRNOG00000008301.8"/>
</dbReference>
<dbReference type="GeneID" id="304983"/>
<dbReference type="KEGG" id="rno:304983"/>
<dbReference type="UCSC" id="RGD:1310840">
    <property type="organism name" value="rat"/>
</dbReference>
<dbReference type="AGR" id="RGD:1310840"/>
<dbReference type="CTD" id="8407"/>
<dbReference type="RGD" id="1310840">
    <property type="gene designation" value="Tagln2"/>
</dbReference>
<dbReference type="eggNOG" id="KOG2046">
    <property type="taxonomic scope" value="Eukaryota"/>
</dbReference>
<dbReference type="GeneTree" id="ENSGT00940000158886"/>
<dbReference type="HOGENOM" id="CLU_055232_1_0_1"/>
<dbReference type="InParanoid" id="Q5XFX0"/>
<dbReference type="PhylomeDB" id="Q5XFX0"/>
<dbReference type="TreeFam" id="TF313921"/>
<dbReference type="Reactome" id="R-RNO-114608">
    <property type="pathway name" value="Platelet degranulation"/>
</dbReference>
<dbReference type="PRO" id="PR:Q5XFX0"/>
<dbReference type="Proteomes" id="UP000002494">
    <property type="component" value="Chromosome 13"/>
</dbReference>
<dbReference type="Bgee" id="ENSRNOG00000008301">
    <property type="expression patterns" value="Expressed in lung and 19 other cell types or tissues"/>
</dbReference>
<dbReference type="GO" id="GO:0015629">
    <property type="term" value="C:actin cytoskeleton"/>
    <property type="evidence" value="ECO:0000318"/>
    <property type="project" value="GO_Central"/>
</dbReference>
<dbReference type="GO" id="GO:0051015">
    <property type="term" value="F:actin filament binding"/>
    <property type="evidence" value="ECO:0000318"/>
    <property type="project" value="GO_Central"/>
</dbReference>
<dbReference type="GO" id="GO:0007015">
    <property type="term" value="P:actin filament organization"/>
    <property type="evidence" value="ECO:0000318"/>
    <property type="project" value="GO_Central"/>
</dbReference>
<dbReference type="GO" id="GO:0030855">
    <property type="term" value="P:epithelial cell differentiation"/>
    <property type="evidence" value="ECO:0000266"/>
    <property type="project" value="RGD"/>
</dbReference>
<dbReference type="CDD" id="cd21280">
    <property type="entry name" value="CH_TAGLN2"/>
    <property type="match status" value="1"/>
</dbReference>
<dbReference type="FunFam" id="1.10.418.10:FF:000039">
    <property type="entry name" value="Transgelin"/>
    <property type="match status" value="1"/>
</dbReference>
<dbReference type="Gene3D" id="1.10.418.10">
    <property type="entry name" value="Calponin-like domain"/>
    <property type="match status" value="1"/>
</dbReference>
<dbReference type="InterPro" id="IPR050606">
    <property type="entry name" value="Calponin-like"/>
</dbReference>
<dbReference type="InterPro" id="IPR000557">
    <property type="entry name" value="Calponin_repeat"/>
</dbReference>
<dbReference type="InterPro" id="IPR001715">
    <property type="entry name" value="CH_dom"/>
</dbReference>
<dbReference type="InterPro" id="IPR036872">
    <property type="entry name" value="CH_dom_sf"/>
</dbReference>
<dbReference type="InterPro" id="IPR003096">
    <property type="entry name" value="SM22_calponin"/>
</dbReference>
<dbReference type="PANTHER" id="PTHR47385">
    <property type="entry name" value="CALPONIN"/>
    <property type="match status" value="1"/>
</dbReference>
<dbReference type="PANTHER" id="PTHR47385:SF20">
    <property type="entry name" value="TRANSGELIN-2"/>
    <property type="match status" value="1"/>
</dbReference>
<dbReference type="Pfam" id="PF00402">
    <property type="entry name" value="Calponin"/>
    <property type="match status" value="1"/>
</dbReference>
<dbReference type="Pfam" id="PF00307">
    <property type="entry name" value="CH"/>
    <property type="match status" value="1"/>
</dbReference>
<dbReference type="PRINTS" id="PR00888">
    <property type="entry name" value="SM22CALPONIN"/>
</dbReference>
<dbReference type="PRINTS" id="PR00890">
    <property type="entry name" value="TRANSGELIN"/>
</dbReference>
<dbReference type="SMART" id="SM00033">
    <property type="entry name" value="CH"/>
    <property type="match status" value="1"/>
</dbReference>
<dbReference type="SUPFAM" id="SSF47576">
    <property type="entry name" value="Calponin-homology domain, CH-domain"/>
    <property type="match status" value="1"/>
</dbReference>
<dbReference type="PROSITE" id="PS01052">
    <property type="entry name" value="CALPONIN_1"/>
    <property type="match status" value="1"/>
</dbReference>
<dbReference type="PROSITE" id="PS51122">
    <property type="entry name" value="CALPONIN_2"/>
    <property type="match status" value="1"/>
</dbReference>
<dbReference type="PROSITE" id="PS50021">
    <property type="entry name" value="CH"/>
    <property type="match status" value="1"/>
</dbReference>
<protein>
    <recommendedName>
        <fullName>Transgelin-2</fullName>
    </recommendedName>
</protein>
<sequence>MANRGPSYGLSREVQQKIEKQYDPDLEQILIQWITTQCRKGVSQPQPGRENFQNWLKDGTVLCELINSLYPEGQAPVKKIQASTMAFKQMEQISQFLQAAERYGINTTDIFQTVDLWEGKNMACVQRTLMNLGGLAVARDDGLFSGDPNWFPKKSKENPRNFSDNQLQEGKNVIGLQMGTNRGASQAGMTGYGMPRQIL</sequence>
<reference key="1">
    <citation type="journal article" date="2004" name="Genome Res.">
        <title>The status, quality, and expansion of the NIH full-length cDNA project: the Mammalian Gene Collection (MGC).</title>
        <authorList>
            <consortium name="The MGC Project Team"/>
        </authorList>
    </citation>
    <scope>NUCLEOTIDE SEQUENCE [LARGE SCALE MRNA]</scope>
    <source>
        <tissue>Ovary</tissue>
    </source>
</reference>
<reference key="2">
    <citation type="journal article" date="2012" name="Nat. Commun.">
        <title>Quantitative maps of protein phosphorylation sites across 14 different rat organs and tissues.</title>
        <authorList>
            <person name="Lundby A."/>
            <person name="Secher A."/>
            <person name="Lage K."/>
            <person name="Nordsborg N.B."/>
            <person name="Dmytriyev A."/>
            <person name="Lundby C."/>
            <person name="Olsen J.V."/>
        </authorList>
    </citation>
    <scope>PHOSPHORYLATION [LARGE SCALE ANALYSIS] AT SER-163</scope>
    <scope>IDENTIFICATION BY MASS SPECTROMETRY [LARGE SCALE ANALYSIS]</scope>
</reference>
<name>TAGL2_RAT</name>
<accession>Q5XFX0</accession>
<keyword id="KW-0007">Acetylation</keyword>
<keyword id="KW-1017">Isopeptide bond</keyword>
<keyword id="KW-0488">Methylation</keyword>
<keyword id="KW-0597">Phosphoprotein</keyword>
<keyword id="KW-1185">Reference proteome</keyword>
<keyword id="KW-0832">Ubl conjugation</keyword>